<keyword id="KW-0012">Acyltransferase</keyword>
<keyword id="KW-0963">Cytoplasm</keyword>
<keyword id="KW-1185">Reference proteome</keyword>
<keyword id="KW-0808">Transferase</keyword>
<proteinExistence type="evidence at protein level"/>
<accession>Q8ZND6</accession>
<reference key="1">
    <citation type="journal article" date="2001" name="Nature">
        <title>Complete genome sequence of Salmonella enterica serovar Typhimurium LT2.</title>
        <authorList>
            <person name="McClelland M."/>
            <person name="Sanderson K.E."/>
            <person name="Spieth J."/>
            <person name="Clifton S.W."/>
            <person name="Latreille P."/>
            <person name="Courtney L."/>
            <person name="Porwollik S."/>
            <person name="Ali J."/>
            <person name="Dante M."/>
            <person name="Du F."/>
            <person name="Hou S."/>
            <person name="Layman D."/>
            <person name="Leonard S."/>
            <person name="Nguyen C."/>
            <person name="Scott K."/>
            <person name="Holmes A."/>
            <person name="Grewal N."/>
            <person name="Mulvaney E."/>
            <person name="Ryan E."/>
            <person name="Sun H."/>
            <person name="Florea L."/>
            <person name="Miller W."/>
            <person name="Stoneking T."/>
            <person name="Nhan M."/>
            <person name="Waterston R."/>
            <person name="Wilson R.K."/>
        </authorList>
    </citation>
    <scope>NUCLEOTIDE SEQUENCE [LARGE SCALE GENOMIC DNA]</scope>
    <source>
        <strain>LT2 / SGSC1412 / ATCC 700720</strain>
    </source>
</reference>
<reference key="2">
    <citation type="journal article" date="2003" name="J. Bacteriol.">
        <title>Propionyl coenzyme A is a common intermediate in the 1,2-propanediol and propionate catabolic pathways needed for expression of the prpBCDE operon during growth of Salmonella enterica on 1,2-propanediol.</title>
        <authorList>
            <person name="Palacios S."/>
            <person name="Starai V.J."/>
            <person name="Escalante-Semerena J.C."/>
        </authorList>
    </citation>
    <scope>FUNCTION</scope>
    <scope>CATALYTIC ACTIVITY</scope>
    <scope>SUBCELLULAR LOCATION</scope>
    <scope>DISRUPTION PHENOTYPE</scope>
    <source>
        <strain>LT2</strain>
    </source>
</reference>
<reference key="3">
    <citation type="journal article" date="2005" name="Microbiology">
        <title>Acetate excretion during growth of Salmonella enterica on ethanolamine requires phosphotransacetylase (EutD) activity, and acetate recapture requires acetyl-CoA synthetase (Acs) and phosphotransacetylase (Pta) activities.</title>
        <authorList>
            <person name="Starai V.J."/>
            <person name="Garrity J."/>
            <person name="Escalante-Semerena J.C."/>
        </authorList>
    </citation>
    <scope>FUNCTION</scope>
    <scope>CATALYTIC ACTIVITY</scope>
    <scope>SUBCELLULAR LOCATION</scope>
    <scope>DISRUPTION PHENOTYPE</scope>
    <source>
        <strain>LT2</strain>
    </source>
</reference>
<reference key="4">
    <citation type="journal article" date="2007" name="J. Biol. Chem.">
        <title>In vivo and in vitro analyses of single-amino acid variants of the Salmonella enterica phosphotransacetylase enzyme provide insights into the function of its N-terminal domain.</title>
        <authorList>
            <person name="Brinsmade S.R."/>
            <person name="Escalante-Semerena J.C."/>
        </authorList>
    </citation>
    <scope>CATALYTIC ACTIVITY</scope>
    <scope>SUBUNIT</scope>
    <scope>ACTIVITY REGULATION</scope>
    <scope>BIOPHYSICOCHEMICAL PROPERTIES</scope>
    <scope>MUTAGENESIS OF ARG-252; GLY-273 AND MET-294</scope>
</reference>
<feature type="initiator methionine" description="Removed" evidence="1">
    <location>
        <position position="1"/>
    </location>
</feature>
<feature type="chain" id="PRO_0000405551" description="Phosphate acetyltransferase">
    <location>
        <begin position="2"/>
        <end position="714"/>
    </location>
</feature>
<feature type="region of interest" description="Phosphate acetyltransferase">
    <location>
        <begin position="390"/>
        <end position="714"/>
    </location>
</feature>
<feature type="mutagenesis site" description="Increases speed of forward and back reactions by 2-3 fold. Not inhibited by NADH." evidence="4">
    <original>R</original>
    <variation>H</variation>
    <location>
        <position position="252"/>
    </location>
</feature>
<feature type="mutagenesis site" description="Increases speed of forward and back reactions by 2-3 fold." evidence="4">
    <original>G</original>
    <variation>D</variation>
    <location>
        <position position="273"/>
    </location>
</feature>
<feature type="mutagenesis site" description="Slightly decreases speed of forward and back reactions." evidence="4">
    <original>M</original>
    <variation>I</variation>
    <location>
        <position position="294"/>
    </location>
</feature>
<gene>
    <name type="primary">pta</name>
    <name type="ordered locus">STM2338</name>
</gene>
<organism>
    <name type="scientific">Salmonella typhimurium (strain LT2 / SGSC1412 / ATCC 700720)</name>
    <dbReference type="NCBI Taxonomy" id="99287"/>
    <lineage>
        <taxon>Bacteria</taxon>
        <taxon>Pseudomonadati</taxon>
        <taxon>Pseudomonadota</taxon>
        <taxon>Gammaproteobacteria</taxon>
        <taxon>Enterobacterales</taxon>
        <taxon>Enterobacteriaceae</taxon>
        <taxon>Salmonella</taxon>
    </lineage>
</organism>
<name>PTA_SALTY</name>
<comment type="function">
    <text evidence="2 3">Involved in acetate metabolism. Catalyzes the reversible interconversion of acetyl-CoA and acetyl phosphate. The direction of the overall reaction changes depending on growth conditions. Required for acetate recapture but not for acetate excretion when this organism is grown on ethanolamine (EA); is unable to complement an eutD deletion during growth on EA (PubMed:16272400). Works with proprionate kinase PduW to capture exogenous propionate and regenerate propionyl-CoA during degradation of propionate and 1,2-propanediol (1,2-PD) (PubMed:12700259).</text>
</comment>
<comment type="catalytic activity">
    <reaction evidence="4 7">
        <text>acetyl-CoA + phosphate = acetyl phosphate + CoA</text>
        <dbReference type="Rhea" id="RHEA:19521"/>
        <dbReference type="ChEBI" id="CHEBI:22191"/>
        <dbReference type="ChEBI" id="CHEBI:43474"/>
        <dbReference type="ChEBI" id="CHEBI:57287"/>
        <dbReference type="ChEBI" id="CHEBI:57288"/>
        <dbReference type="EC" id="2.3.1.8"/>
    </reaction>
    <physiologicalReaction direction="left-to-right" evidence="4">
        <dbReference type="Rhea" id="RHEA:19522"/>
    </physiologicalReaction>
    <physiologicalReaction direction="right-to-left" evidence="4">
        <dbReference type="Rhea" id="RHEA:19523"/>
    </physiologicalReaction>
</comment>
<comment type="catalytic activity">
    <reaction evidence="6">
        <text>propanoyl-CoA + phosphate = propanoyl phosphate + CoA</text>
        <dbReference type="Rhea" id="RHEA:28046"/>
        <dbReference type="ChEBI" id="CHEBI:43474"/>
        <dbReference type="ChEBI" id="CHEBI:57287"/>
        <dbReference type="ChEBI" id="CHEBI:57392"/>
        <dbReference type="ChEBI" id="CHEBI:58933"/>
        <dbReference type="EC" id="2.3.1.222"/>
    </reaction>
</comment>
<comment type="activity regulation">
    <text evidence="4">Allosterically inhibited by NADH.</text>
</comment>
<comment type="biophysicochemical properties">
    <kinetics>
        <KM evidence="4">162.1 uM for acetyl-CoA</KM>
        <KM evidence="4">329.3 uM for acetyl phosphate</KM>
        <Vmax evidence="4">142.2 uM/h/mg enzyme for acetyl-CoA-forming reaction</Vmax>
        <Vmax evidence="4">20.6 uM/h/mg enzyme for acetyl phosphate-forming reaction</Vmax>
    </kinetics>
</comment>
<comment type="pathway">
    <text>Metabolic intermediate biosynthesis; acetyl-CoA biosynthesis; acetyl-CoA from acetate: step 2/2.</text>
</comment>
<comment type="subunit">
    <text evidence="8">Homohexamer.</text>
</comment>
<comment type="subcellular location">
    <subcellularLocation>
        <location evidence="6 7">Cytoplasm</location>
    </subcellularLocation>
</comment>
<comment type="domain">
    <text evidence="1">The N-terminal region seems to be important for proper quaternary structure. The C-terminal region contains the substrate-binding site (By similarity).</text>
</comment>
<comment type="disruption phenotype">
    <text evidence="2 3">Decreased propionate kinase activity, cells grow to lower density on 1,2-PD and excrete more propionate into the medium (PubMed:12700259). A double acs-pta deletion excretes but no longer recpautres acetate (PubMed:16272400).</text>
</comment>
<comment type="similarity">
    <text evidence="5">In the N-terminal section; belongs to the CobB/CobQ family.</text>
</comment>
<comment type="similarity">
    <text evidence="5">In the C-terminal section; belongs to the phosphate acetyltransferase and butyryltransferase family.</text>
</comment>
<evidence type="ECO:0000250" key="1"/>
<evidence type="ECO:0000269" key="2">
    <source>
    </source>
</evidence>
<evidence type="ECO:0000269" key="3">
    <source>
    </source>
</evidence>
<evidence type="ECO:0000269" key="4">
    <source>
    </source>
</evidence>
<evidence type="ECO:0000305" key="5"/>
<evidence type="ECO:0000305" key="6">
    <source>
    </source>
</evidence>
<evidence type="ECO:0000305" key="7">
    <source>
    </source>
</evidence>
<evidence type="ECO:0000305" key="8">
    <source>
    </source>
</evidence>
<protein>
    <recommendedName>
        <fullName>Phosphate acetyltransferase</fullName>
        <ecNumber evidence="6">2.3.1.222</ecNumber>
        <ecNumber evidence="4">2.3.1.8</ecNumber>
    </recommendedName>
    <alternativeName>
        <fullName>Phosphotransacetylase</fullName>
    </alternativeName>
</protein>
<sequence>MSRIIMLIPTGTSVGLTSVSLGVIRAMERKGVRLSVFKPIAQPRAGGDAPDQTTTIVRANSTLPAAEPLKMSHVESLLSSNQKDVLMEEIIANYHANTKDAEVVLVEGLVPTRKHQFAQSLNYEIAKTLNAEIVFVMSQGTDTPEQLNERIELTRSSFGGAKNTNITGVIINKLNAPVDEQGRTRPDLSEIFDDSSKAQVIKIDPAKLQESSPLPVLGAVPWSFDLIATRAIDMARHLNATIINEGDIKTRRVKSVTFCARSIPHMLEHFRAGSLLVTSADRPDVLVAACLAAMNGVEIGALLLTGGYEMDARISKLCERAFATGLPVFMVNTNTWQTSLSLQSFNLEVPVDDHERIEKVQEYVANYVNAEWIESLTATSERSRRLSPPAFRYQLTELARKAGKRVVLPEGDEPRTVKAAAICAERGIATCVLLGNPDEINRVAASQGVELGAGIEIVDPEVVRESYVARLVELRKSKGMTEPVAREQLEDNVVLGTLMLEQDEVDGLVSGAVHTTANTIRPPLQLIKTAPGSSLVSSVFFMLLPEQVYVYGDCAINPDPTAEQLAEIAIQSADSAIAFGIEPRVAMLSYSTGTSGAGSDVEKVREATRLAQEKRPDLMIDGPLQYDAAVMADVAKSKAPNSPVAGRATVFIFPDLNTGNTTYKAVQRSADLISIGPMLQGMRKPVNDLSRGALVDDIVYTIALTAIQASQQQQ</sequence>
<dbReference type="EC" id="2.3.1.222" evidence="6"/>
<dbReference type="EC" id="2.3.1.8" evidence="4"/>
<dbReference type="EMBL" id="AE006468">
    <property type="protein sequence ID" value="AAL21239.1"/>
    <property type="molecule type" value="Genomic_DNA"/>
</dbReference>
<dbReference type="RefSeq" id="NP_461280.1">
    <property type="nucleotide sequence ID" value="NC_003197.2"/>
</dbReference>
<dbReference type="RefSeq" id="WP_000086692.1">
    <property type="nucleotide sequence ID" value="NC_003197.2"/>
</dbReference>
<dbReference type="SMR" id="Q8ZND6"/>
<dbReference type="STRING" id="99287.STM2338"/>
<dbReference type="PaxDb" id="99287-STM2338"/>
<dbReference type="GeneID" id="1253860"/>
<dbReference type="KEGG" id="stm:STM2338"/>
<dbReference type="PATRIC" id="fig|99287.12.peg.2475"/>
<dbReference type="HOGENOM" id="CLU_019723_2_1_6"/>
<dbReference type="OMA" id="FFMCLAD"/>
<dbReference type="PhylomeDB" id="Q8ZND6"/>
<dbReference type="BioCyc" id="SENT99287:STM2338-MONOMER"/>
<dbReference type="BRENDA" id="2.3.1.8">
    <property type="organism ID" value="2169"/>
</dbReference>
<dbReference type="UniPathway" id="UPA00340">
    <property type="reaction ID" value="UER00459"/>
</dbReference>
<dbReference type="Proteomes" id="UP000001014">
    <property type="component" value="Chromosome"/>
</dbReference>
<dbReference type="GO" id="GO:0005737">
    <property type="term" value="C:cytoplasm"/>
    <property type="evidence" value="ECO:0007669"/>
    <property type="project" value="UniProtKB-SubCell"/>
</dbReference>
<dbReference type="GO" id="GO:0008959">
    <property type="term" value="F:phosphate acetyltransferase activity"/>
    <property type="evidence" value="ECO:0007669"/>
    <property type="project" value="UniProtKB-EC"/>
</dbReference>
<dbReference type="GO" id="GO:0006085">
    <property type="term" value="P:acetyl-CoA biosynthetic process"/>
    <property type="evidence" value="ECO:0007669"/>
    <property type="project" value="UniProtKB-UniPathway"/>
</dbReference>
<dbReference type="CDD" id="cd03109">
    <property type="entry name" value="DTBS"/>
    <property type="match status" value="1"/>
</dbReference>
<dbReference type="FunFam" id="3.40.1390.20:FF:000001">
    <property type="entry name" value="Phosphate acetyltransferase"/>
    <property type="match status" value="1"/>
</dbReference>
<dbReference type="FunFam" id="3.40.50.10750:FF:000001">
    <property type="entry name" value="Phosphate acetyltransferase"/>
    <property type="match status" value="1"/>
</dbReference>
<dbReference type="FunFam" id="3.40.50.10950:FF:000001">
    <property type="entry name" value="Phosphate acetyltransferase"/>
    <property type="match status" value="1"/>
</dbReference>
<dbReference type="FunFam" id="3.40.50.300:FF:000445">
    <property type="entry name" value="Phosphate acetyltransferase"/>
    <property type="match status" value="1"/>
</dbReference>
<dbReference type="Gene3D" id="3.40.50.10950">
    <property type="match status" value="1"/>
</dbReference>
<dbReference type="Gene3D" id="3.40.1390.20">
    <property type="entry name" value="HprK N-terminal domain-like"/>
    <property type="match status" value="1"/>
</dbReference>
<dbReference type="Gene3D" id="3.40.50.10750">
    <property type="entry name" value="Isocitrate/Isopropylmalate dehydrogenase-like"/>
    <property type="match status" value="1"/>
</dbReference>
<dbReference type="Gene3D" id="3.40.50.300">
    <property type="entry name" value="P-loop containing nucleotide triphosphate hydrolases"/>
    <property type="match status" value="1"/>
</dbReference>
<dbReference type="InterPro" id="IPR010766">
    <property type="entry name" value="DRTGG"/>
</dbReference>
<dbReference type="InterPro" id="IPR016475">
    <property type="entry name" value="P-Actrans_bac"/>
</dbReference>
<dbReference type="InterPro" id="IPR027417">
    <property type="entry name" value="P-loop_NTPase"/>
</dbReference>
<dbReference type="InterPro" id="IPR004614">
    <property type="entry name" value="P_AcTrfase"/>
</dbReference>
<dbReference type="InterPro" id="IPR042113">
    <property type="entry name" value="P_AcTrfase_dom1"/>
</dbReference>
<dbReference type="InterPro" id="IPR042112">
    <property type="entry name" value="P_AcTrfase_dom2"/>
</dbReference>
<dbReference type="InterPro" id="IPR050500">
    <property type="entry name" value="Phos_Acetyltrans/Butyryltrans"/>
</dbReference>
<dbReference type="InterPro" id="IPR002505">
    <property type="entry name" value="PTA_PTB"/>
</dbReference>
<dbReference type="InterPro" id="IPR028979">
    <property type="entry name" value="Ser_kin/Pase_Hpr-like_N_sf"/>
</dbReference>
<dbReference type="NCBIfam" id="NF004167">
    <property type="entry name" value="PRK05632.1"/>
    <property type="match status" value="1"/>
</dbReference>
<dbReference type="NCBIfam" id="NF007233">
    <property type="entry name" value="PRK09653.1"/>
    <property type="match status" value="1"/>
</dbReference>
<dbReference type="NCBIfam" id="TIGR00651">
    <property type="entry name" value="pta"/>
    <property type="match status" value="1"/>
</dbReference>
<dbReference type="PANTHER" id="PTHR43356">
    <property type="entry name" value="PHOSPHATE ACETYLTRANSFERASE"/>
    <property type="match status" value="1"/>
</dbReference>
<dbReference type="PANTHER" id="PTHR43356:SF3">
    <property type="entry name" value="PHOSPHATE ACETYLTRANSFERASE"/>
    <property type="match status" value="1"/>
</dbReference>
<dbReference type="Pfam" id="PF13500">
    <property type="entry name" value="AAA_26"/>
    <property type="match status" value="1"/>
</dbReference>
<dbReference type="Pfam" id="PF07085">
    <property type="entry name" value="DRTGG"/>
    <property type="match status" value="1"/>
</dbReference>
<dbReference type="Pfam" id="PF01515">
    <property type="entry name" value="PTA_PTB"/>
    <property type="match status" value="1"/>
</dbReference>
<dbReference type="PIRSF" id="PIRSF006107">
    <property type="entry name" value="PhpActrans_proteobac"/>
    <property type="match status" value="1"/>
</dbReference>
<dbReference type="SUPFAM" id="SSF75138">
    <property type="entry name" value="HprK N-terminal domain-like"/>
    <property type="match status" value="1"/>
</dbReference>
<dbReference type="SUPFAM" id="SSF53659">
    <property type="entry name" value="Isocitrate/Isopropylmalate dehydrogenase-like"/>
    <property type="match status" value="1"/>
</dbReference>
<dbReference type="SUPFAM" id="SSF52540">
    <property type="entry name" value="P-loop containing nucleoside triphosphate hydrolases"/>
    <property type="match status" value="1"/>
</dbReference>